<protein>
    <recommendedName>
        <fullName evidence="1">Putative regulatory protein CPF_2002</fullName>
    </recommendedName>
</protein>
<organism>
    <name type="scientific">Clostridium perfringens (strain ATCC 13124 / DSM 756 / JCM 1290 / NCIMB 6125 / NCTC 8237 / Type A)</name>
    <dbReference type="NCBI Taxonomy" id="195103"/>
    <lineage>
        <taxon>Bacteria</taxon>
        <taxon>Bacillati</taxon>
        <taxon>Bacillota</taxon>
        <taxon>Clostridia</taxon>
        <taxon>Eubacteriales</taxon>
        <taxon>Clostridiaceae</taxon>
        <taxon>Clostridium</taxon>
    </lineage>
</organism>
<name>Y2002_CLOP1</name>
<reference key="1">
    <citation type="journal article" date="2006" name="Genome Res.">
        <title>Skewed genomic variability in strains of the toxigenic bacterial pathogen, Clostridium perfringens.</title>
        <authorList>
            <person name="Myers G.S.A."/>
            <person name="Rasko D.A."/>
            <person name="Cheung J.K."/>
            <person name="Ravel J."/>
            <person name="Seshadri R."/>
            <person name="DeBoy R.T."/>
            <person name="Ren Q."/>
            <person name="Varga J."/>
            <person name="Awad M.M."/>
            <person name="Brinkac L.M."/>
            <person name="Daugherty S.C."/>
            <person name="Haft D.H."/>
            <person name="Dodson R.J."/>
            <person name="Madupu R."/>
            <person name="Nelson W.C."/>
            <person name="Rosovitz M.J."/>
            <person name="Sullivan S.A."/>
            <person name="Khouri H."/>
            <person name="Dimitrov G.I."/>
            <person name="Watkins K.L."/>
            <person name="Mulligan S."/>
            <person name="Benton J."/>
            <person name="Radune D."/>
            <person name="Fisher D.J."/>
            <person name="Atkins H.S."/>
            <person name="Hiscox T."/>
            <person name="Jost B.H."/>
            <person name="Billington S.J."/>
            <person name="Songer J.G."/>
            <person name="McClane B.A."/>
            <person name="Titball R.W."/>
            <person name="Rood J.I."/>
            <person name="Melville S.B."/>
            <person name="Paulsen I.T."/>
        </authorList>
    </citation>
    <scope>NUCLEOTIDE SEQUENCE [LARGE SCALE GENOMIC DNA]</scope>
    <source>
        <strain>ATCC 13124 / DSM 756 / JCM 1290 / NCIMB 6125 / NCTC 8237 / S 107 / Type A</strain>
    </source>
</reference>
<evidence type="ECO:0000255" key="1">
    <source>
        <dbReference type="HAMAP-Rule" id="MF_01503"/>
    </source>
</evidence>
<comment type="similarity">
    <text evidence="1">Belongs to the RemA family.</text>
</comment>
<dbReference type="EMBL" id="CP000246">
    <property type="protein sequence ID" value="ABG82656.1"/>
    <property type="molecule type" value="Genomic_DNA"/>
</dbReference>
<dbReference type="SMR" id="Q0TPK5"/>
<dbReference type="STRING" id="195103.CPF_2002"/>
<dbReference type="PaxDb" id="195103-CPF_2002"/>
<dbReference type="KEGG" id="cpf:CPF_2002"/>
<dbReference type="eggNOG" id="COG2052">
    <property type="taxonomic scope" value="Bacteria"/>
</dbReference>
<dbReference type="HOGENOM" id="CLU_165326_0_0_9"/>
<dbReference type="Proteomes" id="UP000001823">
    <property type="component" value="Chromosome"/>
</dbReference>
<dbReference type="HAMAP" id="MF_01503">
    <property type="entry name" value="RemA"/>
    <property type="match status" value="1"/>
</dbReference>
<dbReference type="InterPro" id="IPR007169">
    <property type="entry name" value="RemA-like"/>
</dbReference>
<dbReference type="NCBIfam" id="NF046064">
    <property type="entry name" value="MtxBflmRegRemA"/>
    <property type="match status" value="1"/>
</dbReference>
<dbReference type="NCBIfam" id="NF003315">
    <property type="entry name" value="PRK04323.1"/>
    <property type="match status" value="1"/>
</dbReference>
<dbReference type="PANTHER" id="PTHR38449:SF1">
    <property type="entry name" value="REGULATORY PROTEIN SSL2874-RELATED"/>
    <property type="match status" value="1"/>
</dbReference>
<dbReference type="PANTHER" id="PTHR38449">
    <property type="entry name" value="REGULATORY PROTEIN TM_1690-RELATED"/>
    <property type="match status" value="1"/>
</dbReference>
<dbReference type="Pfam" id="PF04025">
    <property type="entry name" value="RemA-like"/>
    <property type="match status" value="1"/>
</dbReference>
<gene>
    <name type="ordered locus">CPF_2002</name>
</gene>
<proteinExistence type="inferred from homology"/>
<feature type="chain" id="PRO_0000294253" description="Putative regulatory protein CPF_2002">
    <location>
        <begin position="1"/>
        <end position="89"/>
    </location>
</feature>
<accession>Q0TPK5</accession>
<sequence>MSIKLINIGFGNIVSANRLVAIVSPESAPIKRIIQEARDRGMLIDATYGRRTRAVIITDSDHVILSAVQPETVAHRLSTKEEVVVEDDE</sequence>